<reference evidence="4" key="1">
    <citation type="journal article" date="2007" name="J. Proteome Res.">
        <title>Amphibian skin secretomics: application of parallel quadrupole time-of-flight mass spectrometry and peptide precursor cDNA cloning to rapidly characterize the skin secretory peptidome of Phyllomedusa hypochondrialis azurea: discovery of a novel peptide family, the hyposins.</title>
        <authorList>
            <person name="Thompson A.H."/>
            <person name="Bjourson A.J."/>
            <person name="Orr D.F."/>
            <person name="Shaw C."/>
            <person name="McClean S."/>
        </authorList>
    </citation>
    <scope>PROTEIN SEQUENCE</scope>
    <scope>SUBCELLULAR LOCATION</scope>
    <scope>TISSUE SPECIFICITY</scope>
    <scope>MASS SPECTROMETRY</scope>
    <scope>AMIDATION AT LYS-11</scope>
    <source>
        <tissue evidence="1">Skin secretion</tissue>
    </source>
</reference>
<reference key="2">
    <citation type="journal article" date="2008" name="Peptides">
        <title>A consistent nomenclature of antimicrobial peptides isolated from frogs of the subfamily Phyllomedusinae.</title>
        <authorList>
            <person name="Amiche M."/>
            <person name="Ladram A."/>
            <person name="Nicolas P."/>
        </authorList>
    </citation>
    <scope>NOMENCLATURE</scope>
</reference>
<protein>
    <recommendedName>
        <fullName evidence="3">Hyposin-H1</fullName>
        <shortName evidence="3">HPS-H1</shortName>
    </recommendedName>
    <alternativeName>
        <fullName evidence="3">Hyposin-1</fullName>
    </alternativeName>
    <alternativeName>
        <fullName evidence="2">Hyposin-HA1</fullName>
    </alternativeName>
</protein>
<sequence length="11" mass="1235">LRPAVIRPKGK</sequence>
<organism>
    <name type="scientific">Pithecopus azureus</name>
    <name type="common">Orange-legged monkey tree frog</name>
    <name type="synonym">Phyllomedusa azurea</name>
    <dbReference type="NCBI Taxonomy" id="2034991"/>
    <lineage>
        <taxon>Eukaryota</taxon>
        <taxon>Metazoa</taxon>
        <taxon>Chordata</taxon>
        <taxon>Craniata</taxon>
        <taxon>Vertebrata</taxon>
        <taxon>Euteleostomi</taxon>
        <taxon>Amphibia</taxon>
        <taxon>Batrachia</taxon>
        <taxon>Anura</taxon>
        <taxon>Neobatrachia</taxon>
        <taxon>Hyloidea</taxon>
        <taxon>Hylidae</taxon>
        <taxon>Phyllomedusinae</taxon>
        <taxon>Pithecopus</taxon>
    </lineage>
</organism>
<accession>P84954</accession>
<keyword id="KW-0027">Amidation</keyword>
<keyword id="KW-0903">Direct protein sequencing</keyword>
<keyword id="KW-0964">Secreted</keyword>
<evidence type="ECO:0000269" key="1">
    <source>
    </source>
</evidence>
<evidence type="ECO:0000303" key="2">
    <source>
    </source>
</evidence>
<evidence type="ECO:0000303" key="3">
    <source>
    </source>
</evidence>
<evidence type="ECO:0000305" key="4"/>
<name>HPS1_PITAZ</name>
<dbReference type="GO" id="GO:0005576">
    <property type="term" value="C:extracellular region"/>
    <property type="evidence" value="ECO:0007669"/>
    <property type="project" value="UniProtKB-SubCell"/>
</dbReference>
<feature type="peptide" id="PRO_0000250429" description="Hyposin-H1" evidence="1">
    <location>
        <begin position="1"/>
        <end position="11"/>
    </location>
</feature>
<feature type="modified residue" description="Lysine amide" evidence="1">
    <location>
        <position position="11"/>
    </location>
</feature>
<proteinExistence type="evidence at protein level"/>
<comment type="subcellular location">
    <subcellularLocation>
        <location evidence="1">Secreted</location>
    </subcellularLocation>
</comment>
<comment type="tissue specificity">
    <text evidence="1">Expressed by the skin glands.</text>
</comment>
<comment type="mass spectrometry" mass="1232.89" method="MALDI" evidence="1"/>
<comment type="similarity">
    <text evidence="4">Belongs to the frog skin active peptide (FSAP) family. Hyposin subfamily.</text>
</comment>
<comment type="online information" name="The antimicrobial peptide database">
    <link uri="https://wangapd3.com/database/query_output.php?ID=00902"/>
</comment>